<evidence type="ECO:0000255" key="1">
    <source>
        <dbReference type="HAMAP-Rule" id="MF_00275"/>
    </source>
</evidence>
<keyword id="KW-0997">Cell inner membrane</keyword>
<keyword id="KW-1003">Cell membrane</keyword>
<keyword id="KW-0406">Ion transport</keyword>
<keyword id="KW-0472">Membrane</keyword>
<keyword id="KW-0630">Potassium</keyword>
<keyword id="KW-0633">Potassium transport</keyword>
<keyword id="KW-0812">Transmembrane</keyword>
<keyword id="KW-1133">Transmembrane helix</keyword>
<keyword id="KW-0813">Transport</keyword>
<accession>B5EZE4</accession>
<reference key="1">
    <citation type="journal article" date="2011" name="J. Bacteriol.">
        <title>Comparative genomics of 28 Salmonella enterica isolates: evidence for CRISPR-mediated adaptive sublineage evolution.</title>
        <authorList>
            <person name="Fricke W.F."/>
            <person name="Mammel M.K."/>
            <person name="McDermott P.F."/>
            <person name="Tartera C."/>
            <person name="White D.G."/>
            <person name="Leclerc J.E."/>
            <person name="Ravel J."/>
            <person name="Cebula T.A."/>
        </authorList>
    </citation>
    <scope>NUCLEOTIDE SEQUENCE [LARGE SCALE GENOMIC DNA]</scope>
    <source>
        <strain>SL483</strain>
    </source>
</reference>
<dbReference type="EMBL" id="CP001138">
    <property type="protein sequence ID" value="ACH50953.1"/>
    <property type="molecule type" value="Genomic_DNA"/>
</dbReference>
<dbReference type="RefSeq" id="WP_000730078.1">
    <property type="nucleotide sequence ID" value="NC_011149.1"/>
</dbReference>
<dbReference type="SMR" id="B5EZE4"/>
<dbReference type="KEGG" id="sea:SeAg_B0754"/>
<dbReference type="HOGENOM" id="CLU_018614_3_0_6"/>
<dbReference type="Proteomes" id="UP000008819">
    <property type="component" value="Chromosome"/>
</dbReference>
<dbReference type="GO" id="GO:0005886">
    <property type="term" value="C:plasma membrane"/>
    <property type="evidence" value="ECO:0007669"/>
    <property type="project" value="UniProtKB-SubCell"/>
</dbReference>
<dbReference type="GO" id="GO:0008556">
    <property type="term" value="F:P-type potassium transmembrane transporter activity"/>
    <property type="evidence" value="ECO:0007669"/>
    <property type="project" value="InterPro"/>
</dbReference>
<dbReference type="GO" id="GO:0030955">
    <property type="term" value="F:potassium ion binding"/>
    <property type="evidence" value="ECO:0007669"/>
    <property type="project" value="UniProtKB-UniRule"/>
</dbReference>
<dbReference type="HAMAP" id="MF_00275">
    <property type="entry name" value="KdpA"/>
    <property type="match status" value="1"/>
</dbReference>
<dbReference type="InterPro" id="IPR004623">
    <property type="entry name" value="KdpA"/>
</dbReference>
<dbReference type="NCBIfam" id="TIGR00680">
    <property type="entry name" value="kdpA"/>
    <property type="match status" value="1"/>
</dbReference>
<dbReference type="PANTHER" id="PTHR30607">
    <property type="entry name" value="POTASSIUM-TRANSPORTING ATPASE A CHAIN"/>
    <property type="match status" value="1"/>
</dbReference>
<dbReference type="PANTHER" id="PTHR30607:SF2">
    <property type="entry name" value="POTASSIUM-TRANSPORTING ATPASE POTASSIUM-BINDING SUBUNIT"/>
    <property type="match status" value="1"/>
</dbReference>
<dbReference type="Pfam" id="PF03814">
    <property type="entry name" value="KdpA"/>
    <property type="match status" value="1"/>
</dbReference>
<dbReference type="PIRSF" id="PIRSF001294">
    <property type="entry name" value="K_ATPaseA"/>
    <property type="match status" value="1"/>
</dbReference>
<organism>
    <name type="scientific">Salmonella agona (strain SL483)</name>
    <dbReference type="NCBI Taxonomy" id="454166"/>
    <lineage>
        <taxon>Bacteria</taxon>
        <taxon>Pseudomonadati</taxon>
        <taxon>Pseudomonadota</taxon>
        <taxon>Gammaproteobacteria</taxon>
        <taxon>Enterobacterales</taxon>
        <taxon>Enterobacteriaceae</taxon>
        <taxon>Salmonella</taxon>
    </lineage>
</organism>
<gene>
    <name evidence="1" type="primary">kdpA</name>
    <name type="ordered locus">SeAg_B0754</name>
</gene>
<sequence>MAAQGFLLIASFLLILLVLAKPLGSGLARLIAAVPLPGVAGVERILWRTLGITDHEMNWRQYLLALLTLNLLGLGILFCLLFWQEWLPLNPQRLPGLSWDLALNTAVSFVTNTNWQAYSGESTLSYFSQMAGLTVQNFLSAATGIAVVFALIRAFTRQNVHTLGNAWQDLVRITLWILFPVALIIALFFIQQGVPQNLSAYQPITTLEGAKQLLPMGPVASQEAIKMLGTNGGGFFNANSSHPFENPTALTNLAQMLAIFLIPAALCFAFGEAAGDRRQGRALLWAMSFIFVVCVAVVMWAEVQGNPHLLAAGADSSVNMEGKETRFGVLASSLFAVVTTAASCGAVNAMHDSFTALGGMVPMWLMQIGEVVFGGVGSGLYGMLLFVLLAVFIAGLMIGRTPEYLGKKIDVREMKMTALAILVTPMLVLLGSALAMMTDAGRSAMLNPGPHGFSEVLYAVSSAANNNGSAFAGLSANSPFWNCLLAFCMFVGRFGVIIPVMAIAGSLVSKKVQPASQGTLATHGALFIGLLIGTVLLVGALTFIPALALGPVAEHFSLP</sequence>
<comment type="function">
    <text evidence="1">Part of the high-affinity ATP-driven potassium transport (or Kdp) system, which catalyzes the hydrolysis of ATP coupled with the electrogenic transport of potassium into the cytoplasm. This subunit binds the periplasmic potassium ions and delivers the ions to the membrane domain of KdpB through an intramembrane tunnel.</text>
</comment>
<comment type="subunit">
    <text evidence="1">The system is composed of three essential subunits: KdpA, KdpB and KdpC.</text>
</comment>
<comment type="subcellular location">
    <subcellularLocation>
        <location evidence="1">Cell inner membrane</location>
        <topology evidence="1">Multi-pass membrane protein</topology>
    </subcellularLocation>
</comment>
<comment type="similarity">
    <text evidence="1">Belongs to the KdpA family.</text>
</comment>
<protein>
    <recommendedName>
        <fullName evidence="1">Potassium-transporting ATPase potassium-binding subunit</fullName>
    </recommendedName>
    <alternativeName>
        <fullName evidence="1">ATP phosphohydrolase [potassium-transporting] A chain</fullName>
    </alternativeName>
    <alternativeName>
        <fullName evidence="1">Potassium-binding and translocating subunit A</fullName>
    </alternativeName>
    <alternativeName>
        <fullName evidence="1">Potassium-translocating ATPase A chain</fullName>
    </alternativeName>
</protein>
<proteinExistence type="inferred from homology"/>
<name>KDPA_SALA4</name>
<feature type="chain" id="PRO_1000114698" description="Potassium-transporting ATPase potassium-binding subunit">
    <location>
        <begin position="1"/>
        <end position="559"/>
    </location>
</feature>
<feature type="transmembrane region" description="Helical" evidence="1">
    <location>
        <begin position="5"/>
        <end position="25"/>
    </location>
</feature>
<feature type="transmembrane region" description="Helical" evidence="1">
    <location>
        <begin position="27"/>
        <end position="47"/>
    </location>
</feature>
<feature type="transmembrane region" description="Helical" evidence="1">
    <location>
        <begin position="63"/>
        <end position="83"/>
    </location>
</feature>
<feature type="transmembrane region" description="Helical" evidence="1">
    <location>
        <begin position="132"/>
        <end position="152"/>
    </location>
</feature>
<feature type="transmembrane region" description="Helical" evidence="1">
    <location>
        <begin position="170"/>
        <end position="190"/>
    </location>
</feature>
<feature type="transmembrane region" description="Helical" evidence="1">
    <location>
        <begin position="253"/>
        <end position="273"/>
    </location>
</feature>
<feature type="transmembrane region" description="Helical" evidence="1">
    <location>
        <begin position="283"/>
        <end position="303"/>
    </location>
</feature>
<feature type="transmembrane region" description="Helical" evidence="1">
    <location>
        <begin position="327"/>
        <end position="347"/>
    </location>
</feature>
<feature type="transmembrane region" description="Helical" evidence="1">
    <location>
        <begin position="356"/>
        <end position="376"/>
    </location>
</feature>
<feature type="transmembrane region" description="Helical" evidence="1">
    <location>
        <begin position="379"/>
        <end position="399"/>
    </location>
</feature>
<feature type="transmembrane region" description="Helical" evidence="1">
    <location>
        <begin position="416"/>
        <end position="436"/>
    </location>
</feature>
<feature type="transmembrane region" description="Helical" evidence="1">
    <location>
        <begin position="484"/>
        <end position="504"/>
    </location>
</feature>
<feature type="transmembrane region" description="Helical" evidence="1">
    <location>
        <begin position="524"/>
        <end position="544"/>
    </location>
</feature>